<keyword id="KW-0002">3D-structure</keyword>
<keyword id="KW-0998">Cell outer membrane</keyword>
<keyword id="KW-0449">Lipoprotein</keyword>
<keyword id="KW-0472">Membrane</keyword>
<keyword id="KW-0564">Palmitate</keyword>
<keyword id="KW-0614">Plasmid</keyword>
<keyword id="KW-1185">Reference proteome</keyword>
<keyword id="KW-0732">Signal</keyword>
<geneLocation type="plasmid">
    <name>lp54</name>
</geneLocation>
<gene>
    <name type="primary">ospB</name>
    <name type="ordered locus">BB_A16</name>
</gene>
<feature type="signal peptide">
    <location>
        <begin position="1"/>
        <end position="15"/>
    </location>
</feature>
<feature type="chain" id="PRO_0000018081" description="Outer surface protein B">
    <location>
        <begin position="16"/>
        <end position="296"/>
    </location>
</feature>
<feature type="region of interest" description="Disordered" evidence="1">
    <location>
        <begin position="25"/>
        <end position="51"/>
    </location>
</feature>
<feature type="compositionally biased region" description="Basic and acidic residues" evidence="1">
    <location>
        <begin position="28"/>
        <end position="39"/>
    </location>
</feature>
<feature type="lipid moiety-binding region" description="N-palmitoyl cysteine" evidence="2">
    <location>
        <position position="16"/>
    </location>
</feature>
<feature type="lipid moiety-binding region" description="S-diacylglycerol cysteine" evidence="2">
    <location>
        <position position="16"/>
    </location>
</feature>
<feature type="sequence variant" description="In strain: CA7.">
    <original>H</original>
    <variation>Y</variation>
    <location>
        <position position="42"/>
    </location>
</feature>
<feature type="sequence variant" description="In strain: 41552MA.">
    <original>K</original>
    <variation>R</variation>
    <location>
        <position position="89"/>
    </location>
</feature>
<feature type="sequence variant" description="In strain: CA8.">
    <original>T</original>
    <variation>S</variation>
    <location>
        <position position="123"/>
    </location>
</feature>
<feature type="sequence variant" description="In strain: 21343WI, 41552MA, 42373NY3, HB19 and HB19CT1.">
    <original>A</original>
    <variation>T</variation>
    <location>
        <position position="126"/>
    </location>
</feature>
<feature type="sequence variant" description="In strain: 21343WI, 41552MA, HB19 and HB19CT1.">
    <original>D</original>
    <variation>N</variation>
    <location>
        <position position="128"/>
    </location>
</feature>
<feature type="sequence variant" description="In strain: CA8.">
    <original>Q</original>
    <variation>P</variation>
    <location>
        <position position="132"/>
    </location>
</feature>
<feature type="sequence variant" description="In strain: CA8.">
    <original>A</original>
    <variation>T</variation>
    <location>
        <position position="176"/>
    </location>
</feature>
<feature type="sequence variant" description="In strain: CA8.">
    <original>S</original>
    <variation>G</variation>
    <location>
        <position position="189"/>
    </location>
</feature>
<feature type="sequence variant" description="In strain: CA8.">
    <original>L</original>
    <variation>F</variation>
    <location>
        <position position="192"/>
    </location>
</feature>
<feature type="sequence variant" description="In strain: 21343WI, CA3 and CA7.">
    <original>G</original>
    <variation>V</variation>
    <location>
        <position position="198"/>
    </location>
</feature>
<feature type="sequence variant" description="In strain: CA8.">
    <original>K</original>
    <variation>Q</variation>
    <location>
        <position position="218"/>
    </location>
</feature>
<feature type="sequence variant" description="In strain: 21343WI, 41552MA, 42373NY3, HB19 and HB19CT1.">
    <original>K</original>
    <variation>T</variation>
    <location>
        <position position="253"/>
    </location>
</feature>
<feature type="sequence conflict" description="In Ref. 3; AAA63758." evidence="2" ref="3">
    <original>A</original>
    <variation>R</variation>
    <location>
        <position position="12"/>
    </location>
</feature>
<feature type="sequence conflict" description="In Ref. 1; CAA32580." evidence="2" ref="1">
    <original>G</original>
    <variation>V</variation>
    <location>
        <position position="198"/>
    </location>
</feature>
<feature type="sequence conflict" description="In Ref. 3; AAA63758." evidence="2" ref="3">
    <original>R</original>
    <variation>I</variation>
    <location>
        <position position="214"/>
    </location>
</feature>
<feature type="strand" evidence="3">
    <location>
        <begin position="158"/>
        <end position="161"/>
    </location>
</feature>
<feature type="strand" evidence="3">
    <location>
        <begin position="167"/>
        <end position="177"/>
    </location>
</feature>
<feature type="strand" evidence="3">
    <location>
        <begin position="179"/>
        <end position="186"/>
    </location>
</feature>
<feature type="helix" evidence="3">
    <location>
        <begin position="187"/>
        <end position="189"/>
    </location>
</feature>
<feature type="strand" evidence="3">
    <location>
        <begin position="190"/>
        <end position="197"/>
    </location>
</feature>
<feature type="strand" evidence="3">
    <location>
        <begin position="200"/>
        <end position="207"/>
    </location>
</feature>
<feature type="strand" evidence="3">
    <location>
        <begin position="210"/>
        <end position="216"/>
    </location>
</feature>
<feature type="strand" evidence="3">
    <location>
        <begin position="218"/>
        <end position="228"/>
    </location>
</feature>
<feature type="strand" evidence="3">
    <location>
        <begin position="231"/>
        <end position="233"/>
    </location>
</feature>
<feature type="strand" evidence="3">
    <location>
        <begin position="235"/>
        <end position="240"/>
    </location>
</feature>
<feature type="helix" evidence="3">
    <location>
        <begin position="241"/>
        <end position="243"/>
    </location>
</feature>
<feature type="strand" evidence="3">
    <location>
        <begin position="245"/>
        <end position="250"/>
    </location>
</feature>
<feature type="strand" evidence="3">
    <location>
        <begin position="253"/>
        <end position="260"/>
    </location>
</feature>
<feature type="strand" evidence="3">
    <location>
        <begin position="266"/>
        <end position="271"/>
    </location>
</feature>
<feature type="strand" evidence="3">
    <location>
        <begin position="275"/>
        <end position="278"/>
    </location>
</feature>
<feature type="helix" evidence="3">
    <location>
        <begin position="288"/>
        <end position="294"/>
    </location>
</feature>
<comment type="subcellular location">
    <subcellularLocation>
        <location>Cell outer membrane</location>
        <topology>Lipid-anchor</topology>
    </subcellularLocation>
</comment>
<protein>
    <recommendedName>
        <fullName>Outer surface protein B</fullName>
    </recommendedName>
</protein>
<dbReference type="EMBL" id="X14407">
    <property type="protein sequence ID" value="CAA32580.1"/>
    <property type="molecule type" value="Genomic_DNA"/>
</dbReference>
<dbReference type="EMBL" id="L23136">
    <property type="protein sequence ID" value="AAA22952.1"/>
    <property type="molecule type" value="Genomic_DNA"/>
</dbReference>
<dbReference type="EMBL" id="L23137">
    <property type="protein sequence ID" value="AAA22954.1"/>
    <property type="molecule type" value="Genomic_DNA"/>
</dbReference>
<dbReference type="EMBL" id="L23138">
    <property type="protein sequence ID" value="AAA20948.1"/>
    <property type="molecule type" value="Genomic_DNA"/>
</dbReference>
<dbReference type="EMBL" id="L23139">
    <property type="protein sequence ID" value="AAA20950.1"/>
    <property type="molecule type" value="Genomic_DNA"/>
</dbReference>
<dbReference type="EMBL" id="L23140">
    <property type="protein sequence ID" value="AAA20952.1"/>
    <property type="molecule type" value="Genomic_DNA"/>
</dbReference>
<dbReference type="EMBL" id="L23141">
    <property type="protein sequence ID" value="AAA20954.1"/>
    <property type="molecule type" value="Genomic_DNA"/>
</dbReference>
<dbReference type="EMBL" id="L23142">
    <property type="protein sequence ID" value="AAA20956.1"/>
    <property type="molecule type" value="Genomic_DNA"/>
</dbReference>
<dbReference type="EMBL" id="L23143">
    <property type="protein sequence ID" value="AAA20958.1"/>
    <property type="molecule type" value="Genomic_DNA"/>
</dbReference>
<dbReference type="EMBL" id="L23144">
    <property type="protein sequence ID" value="AAA20960.1"/>
    <property type="molecule type" value="Genomic_DNA"/>
</dbReference>
<dbReference type="EMBL" id="L31399">
    <property type="protein sequence ID" value="AAA63758.1"/>
    <property type="molecule type" value="Genomic_DNA"/>
</dbReference>
<dbReference type="EMBL" id="AE000790">
    <property type="protein sequence ID" value="AAC66243.2"/>
    <property type="molecule type" value="Genomic_DNA"/>
</dbReference>
<dbReference type="PIR" id="H70208">
    <property type="entry name" value="H70208"/>
</dbReference>
<dbReference type="PIR" id="I40250">
    <property type="entry name" value="I40250"/>
</dbReference>
<dbReference type="PIR" id="I40252">
    <property type="entry name" value="I40252"/>
</dbReference>
<dbReference type="PIR" id="I40256">
    <property type="entry name" value="I40256"/>
</dbReference>
<dbReference type="PIR" id="I40258">
    <property type="entry name" value="I40258"/>
</dbReference>
<dbReference type="PIR" id="I40260">
    <property type="entry name" value="I40260"/>
</dbReference>
<dbReference type="PIR" id="I40264">
    <property type="entry name" value="I40264"/>
</dbReference>
<dbReference type="PIR" id="I40266">
    <property type="entry name" value="I40266"/>
</dbReference>
<dbReference type="PIR" id="I40267">
    <property type="entry name" value="I40267"/>
</dbReference>
<dbReference type="PIR" id="S06915">
    <property type="entry name" value="S06915"/>
</dbReference>
<dbReference type="RefSeq" id="NP_045689.2">
    <property type="nucleotide sequence ID" value="NC_001857.2"/>
</dbReference>
<dbReference type="RefSeq" id="WP_010890379.1">
    <property type="nucleotide sequence ID" value="NC_001857.2"/>
</dbReference>
<dbReference type="PDB" id="1P4P">
    <property type="method" value="X-ray"/>
    <property type="resolution" value="2.00 A"/>
    <property type="chains" value="A=152-296"/>
</dbReference>
<dbReference type="PDB" id="1RJL">
    <property type="method" value="X-ray"/>
    <property type="resolution" value="2.60 A"/>
    <property type="chains" value="C=202-296"/>
</dbReference>
<dbReference type="PDBsum" id="1P4P"/>
<dbReference type="PDBsum" id="1RJL"/>
<dbReference type="SMR" id="P17739"/>
<dbReference type="DIP" id="DIP-60765N"/>
<dbReference type="IntAct" id="P17739">
    <property type="interactions" value="1"/>
</dbReference>
<dbReference type="ABCD" id="P17739">
    <property type="antibodies" value="1 sequenced antibody"/>
</dbReference>
<dbReference type="EnsemblBacteria" id="AAC66243">
    <property type="protein sequence ID" value="AAC66243"/>
    <property type="gene ID" value="BB_A16"/>
</dbReference>
<dbReference type="GeneID" id="56568597"/>
<dbReference type="KEGG" id="bbu:BB_A16"/>
<dbReference type="PATRIC" id="fig|224326.49.peg.1534"/>
<dbReference type="HOGENOM" id="CLU_1014382_0_0_12"/>
<dbReference type="OrthoDB" id="352028at2"/>
<dbReference type="EvolutionaryTrace" id="P17739"/>
<dbReference type="Proteomes" id="UP000001807">
    <property type="component" value="Plasmid lp54"/>
</dbReference>
<dbReference type="GO" id="GO:0009279">
    <property type="term" value="C:cell outer membrane"/>
    <property type="evidence" value="ECO:0007669"/>
    <property type="project" value="UniProtKB-SubCell"/>
</dbReference>
<dbReference type="GO" id="GO:0016020">
    <property type="term" value="C:membrane"/>
    <property type="evidence" value="ECO:0000314"/>
    <property type="project" value="CAFA"/>
</dbReference>
<dbReference type="FunFam" id="3.90.930.1:FF:000001">
    <property type="entry name" value="Outer surface protein A"/>
    <property type="match status" value="1"/>
</dbReference>
<dbReference type="Gene3D" id="3.90.930.1">
    <property type="match status" value="1"/>
</dbReference>
<dbReference type="Gene3D" id="2.40.128.160">
    <property type="entry name" value="C1 set domains (antibody constant domain-like)"/>
    <property type="match status" value="1"/>
</dbReference>
<dbReference type="InterPro" id="IPR001809">
    <property type="entry name" value="OM_lipoprot_Borrelia"/>
</dbReference>
<dbReference type="InterPro" id="IPR023322">
    <property type="entry name" value="OM_lipoprot_dom_sf"/>
</dbReference>
<dbReference type="Pfam" id="PF00820">
    <property type="entry name" value="Lipoprotein_1"/>
    <property type="match status" value="1"/>
</dbReference>
<dbReference type="PRINTS" id="PR00968">
    <property type="entry name" value="OUTRSURFACE"/>
</dbReference>
<dbReference type="SUPFAM" id="SSF51087">
    <property type="entry name" value="Outer surface protein"/>
    <property type="match status" value="1"/>
</dbReference>
<dbReference type="PROSITE" id="PS51257">
    <property type="entry name" value="PROKAR_LIPOPROTEIN"/>
    <property type="match status" value="1"/>
</dbReference>
<name>OSPB_BORBU</name>
<evidence type="ECO:0000256" key="1">
    <source>
        <dbReference type="SAM" id="MobiDB-lite"/>
    </source>
</evidence>
<evidence type="ECO:0000305" key="2"/>
<evidence type="ECO:0007829" key="3">
    <source>
        <dbReference type="PDB" id="1P4P"/>
    </source>
</evidence>
<proteinExistence type="evidence at protein level"/>
<reference key="1">
    <citation type="journal article" date="1989" name="Mol. Microbiol.">
        <title>Molecular analysis of linear plasmid-encoded major surface proteins, OspA and OspB, of the Lyme disease spirochaete Borrelia burgdorferi.</title>
        <authorList>
            <person name="Bergstroem S."/>
            <person name="Bundoc V."/>
            <person name="Barbour A.G."/>
        </authorList>
    </citation>
    <scope>NUCLEOTIDE SEQUENCE [GENOMIC DNA]</scope>
    <source>
        <strain>ATCC 35210 / DSM 4680 / CIP 102532 / B31</strain>
    </source>
</reference>
<reference key="2">
    <citation type="journal article" date="1994" name="Mol. Biol. Evol.">
        <title>Sequence variation in the outer-surface-protein genes of Borrelia burgdorferi.</title>
        <authorList>
            <person name="Caporale D.A."/>
            <person name="Kocher T.D."/>
        </authorList>
    </citation>
    <scope>NUCLEOTIDE SEQUENCE [GENOMIC DNA]</scope>
    <source>
        <strain>Various strains</strain>
    </source>
</reference>
<reference key="3">
    <citation type="journal article" date="1994" name="Infect. Immun.">
        <title>A bactericidal antibody to Borrelia burgdorferi is directed against a variable region of the OspB protein.</title>
        <authorList>
            <person name="Sadziene A."/>
            <person name="Jonsson M."/>
            <person name="Bergstroem S."/>
            <person name="Bright R.K."/>
            <person name="Kennedy R.C."/>
            <person name="Barbour A.G."/>
        </authorList>
    </citation>
    <scope>NUCLEOTIDE SEQUENCE [GENOMIC DNA]</scope>
    <source>
        <strain>HB19</strain>
    </source>
</reference>
<reference key="4">
    <citation type="journal article" date="1997" name="Nature">
        <title>Genomic sequence of a Lyme disease spirochaete, Borrelia burgdorferi.</title>
        <authorList>
            <person name="Fraser C.M."/>
            <person name="Casjens S."/>
            <person name="Huang W.M."/>
            <person name="Sutton G.G."/>
            <person name="Clayton R.A."/>
            <person name="Lathigra R."/>
            <person name="White O."/>
            <person name="Ketchum K.A."/>
            <person name="Dodson R.J."/>
            <person name="Hickey E.K."/>
            <person name="Gwinn M.L."/>
            <person name="Dougherty B.A."/>
            <person name="Tomb J.-F."/>
            <person name="Fleischmann R.D."/>
            <person name="Richardson D.L."/>
            <person name="Peterson J.D."/>
            <person name="Kerlavage A.R."/>
            <person name="Quackenbush J."/>
            <person name="Salzberg S.L."/>
            <person name="Hanson M."/>
            <person name="van Vugt R."/>
            <person name="Palmer N."/>
            <person name="Adams M.D."/>
            <person name="Gocayne J.D."/>
            <person name="Weidman J.F."/>
            <person name="Utterback T.R."/>
            <person name="Watthey L."/>
            <person name="McDonald L.A."/>
            <person name="Artiach P."/>
            <person name="Bowman C."/>
            <person name="Garland S.A."/>
            <person name="Fujii C."/>
            <person name="Cotton M.D."/>
            <person name="Horst K."/>
            <person name="Roberts K.M."/>
            <person name="Hatch B."/>
            <person name="Smith H.O."/>
            <person name="Venter J.C."/>
        </authorList>
    </citation>
    <scope>NUCLEOTIDE SEQUENCE [LARGE SCALE GENOMIC DNA]</scope>
    <source>
        <strain>ATCC 35210 / DSM 4680 / CIP 102532 / B31</strain>
    </source>
</reference>
<reference key="5">
    <citation type="submission" date="2011-11" db="EMBL/GenBank/DDBJ databases">
        <authorList>
            <person name="Mongodin E.F."/>
            <person name="Fraser-Liggett C.M."/>
            <person name="Qiu W.-G."/>
            <person name="Dunn J.J."/>
            <person name="Luft B.J."/>
            <person name="Schutzer S.E."/>
            <person name="Casjens S.R."/>
        </authorList>
    </citation>
    <scope>SEQUENCE REVISION TO 198</scope>
</reference>
<organism>
    <name type="scientific">Borreliella burgdorferi (strain ATCC 35210 / DSM 4680 / CIP 102532 / B31)</name>
    <name type="common">Borrelia burgdorferi</name>
    <dbReference type="NCBI Taxonomy" id="224326"/>
    <lineage>
        <taxon>Bacteria</taxon>
        <taxon>Pseudomonadati</taxon>
        <taxon>Spirochaetota</taxon>
        <taxon>Spirochaetia</taxon>
        <taxon>Spirochaetales</taxon>
        <taxon>Borreliaceae</taxon>
        <taxon>Borreliella</taxon>
    </lineage>
</organism>
<accession>P17739</accession>
<accession>O50909</accession>
<accession>Q44963</accession>
<accession>Q44965</accession>
<accession>Q44966</accession>
<accession>Q44968</accession>
<accession>Q44970</accession>
<accession>Q44972</accession>
<accession>Q44975</accession>
<accession>Q57510</accession>
<sequence>MRLLIGFALALALIGCAQKGAESIGSQKENDLNLEDSSKKSHQNAKQDLPAVTEDSVSLFNGNKIFVSKEKNSSGKYDLRATIDQVELKGTSDKNNGSGTLEGSKPDKSKVKLTVSADLNTVTLEAFDASNQKISSKVTKKQGSITEETLKANKLDSKKLTRSNGTTLEYSQITDADNATKAVETLKNSIKLEGSLVGGKTTVEIKEGTVTLKREIEKDGKVKVFLNDTAGSNKKTGKWEDSTSTLTISADSKKTKDLVFLTDGTITVQQYNTAGTSLEGSASEIKNLSELKNALK</sequence>